<feature type="chain" id="PRO_0000072979" description="Glycine--tRNA ligase">
    <location>
        <begin position="1"/>
        <end position="463"/>
    </location>
</feature>
<feature type="binding site" evidence="1">
    <location>
        <position position="98"/>
    </location>
    <ligand>
        <name>substrate</name>
    </ligand>
</feature>
<feature type="binding site" evidence="1">
    <location>
        <position position="174"/>
    </location>
    <ligand>
        <name>substrate</name>
    </ligand>
</feature>
<feature type="binding site" evidence="1">
    <location>
        <begin position="206"/>
        <end position="208"/>
    </location>
    <ligand>
        <name>ATP</name>
        <dbReference type="ChEBI" id="CHEBI:30616"/>
    </ligand>
</feature>
<feature type="binding site" evidence="1">
    <location>
        <begin position="216"/>
        <end position="221"/>
    </location>
    <ligand>
        <name>ATP</name>
        <dbReference type="ChEBI" id="CHEBI:30616"/>
    </ligand>
</feature>
<feature type="binding site" evidence="1">
    <location>
        <begin position="221"/>
        <end position="225"/>
    </location>
    <ligand>
        <name>substrate</name>
    </ligand>
</feature>
<feature type="binding site" evidence="1">
    <location>
        <begin position="290"/>
        <end position="291"/>
    </location>
    <ligand>
        <name>ATP</name>
        <dbReference type="ChEBI" id="CHEBI:30616"/>
    </ligand>
</feature>
<feature type="binding site" evidence="1">
    <location>
        <begin position="330"/>
        <end position="334"/>
    </location>
    <ligand>
        <name>substrate</name>
    </ligand>
</feature>
<feature type="binding site" evidence="1">
    <location>
        <begin position="334"/>
        <end position="337"/>
    </location>
    <ligand>
        <name>ATP</name>
        <dbReference type="ChEBI" id="CHEBI:30616"/>
    </ligand>
</feature>
<name>SYG_STAEQ</name>
<organism>
    <name type="scientific">Staphylococcus epidermidis (strain ATCC 35984 / DSM 28319 / BCRC 17069 / CCUG 31568 / BM 3577 / RP62A)</name>
    <dbReference type="NCBI Taxonomy" id="176279"/>
    <lineage>
        <taxon>Bacteria</taxon>
        <taxon>Bacillati</taxon>
        <taxon>Bacillota</taxon>
        <taxon>Bacilli</taxon>
        <taxon>Bacillales</taxon>
        <taxon>Staphylococcaceae</taxon>
        <taxon>Staphylococcus</taxon>
    </lineage>
</organism>
<gene>
    <name evidence="1" type="primary">glyQS</name>
    <name type="ordered locus">SERP1132</name>
</gene>
<reference key="1">
    <citation type="journal article" date="2005" name="J. Bacteriol.">
        <title>Insights on evolution of virulence and resistance from the complete genome analysis of an early methicillin-resistant Staphylococcus aureus strain and a biofilm-producing methicillin-resistant Staphylococcus epidermidis strain.</title>
        <authorList>
            <person name="Gill S.R."/>
            <person name="Fouts D.E."/>
            <person name="Archer G.L."/>
            <person name="Mongodin E.F."/>
            <person name="DeBoy R.T."/>
            <person name="Ravel J."/>
            <person name="Paulsen I.T."/>
            <person name="Kolonay J.F."/>
            <person name="Brinkac L.M."/>
            <person name="Beanan M.J."/>
            <person name="Dodson R.J."/>
            <person name="Daugherty S.C."/>
            <person name="Madupu R."/>
            <person name="Angiuoli S.V."/>
            <person name="Durkin A.S."/>
            <person name="Haft D.H."/>
            <person name="Vamathevan J.J."/>
            <person name="Khouri H."/>
            <person name="Utterback T.R."/>
            <person name="Lee C."/>
            <person name="Dimitrov G."/>
            <person name="Jiang L."/>
            <person name="Qin H."/>
            <person name="Weidman J."/>
            <person name="Tran K."/>
            <person name="Kang K.H."/>
            <person name="Hance I.R."/>
            <person name="Nelson K.E."/>
            <person name="Fraser C.M."/>
        </authorList>
    </citation>
    <scope>NUCLEOTIDE SEQUENCE [LARGE SCALE GENOMIC DNA]</scope>
    <source>
        <strain>ATCC 35984 / DSM 28319 / BCRC 17069 / CCUG 31568 / BM 3577 / RP62A</strain>
    </source>
</reference>
<protein>
    <recommendedName>
        <fullName evidence="1">Glycine--tRNA ligase</fullName>
        <ecNumber evidence="1">6.1.1.14</ecNumber>
    </recommendedName>
    <alternativeName>
        <fullName evidence="1">Glycyl-tRNA synthetase</fullName>
        <shortName evidence="1">GlyRS</shortName>
    </alternativeName>
</protein>
<proteinExistence type="inferred from homology"/>
<dbReference type="EC" id="6.1.1.14" evidence="1"/>
<dbReference type="EMBL" id="CP000029">
    <property type="protein sequence ID" value="AAW54453.1"/>
    <property type="molecule type" value="Genomic_DNA"/>
</dbReference>
<dbReference type="RefSeq" id="WP_002456487.1">
    <property type="nucleotide sequence ID" value="NC_002976.3"/>
</dbReference>
<dbReference type="SMR" id="Q5HNY2"/>
<dbReference type="STRING" id="176279.SERP1132"/>
<dbReference type="KEGG" id="ser:SERP1132"/>
<dbReference type="eggNOG" id="COG0423">
    <property type="taxonomic scope" value="Bacteria"/>
</dbReference>
<dbReference type="HOGENOM" id="CLU_015515_2_1_9"/>
<dbReference type="Proteomes" id="UP000000531">
    <property type="component" value="Chromosome"/>
</dbReference>
<dbReference type="GO" id="GO:0005737">
    <property type="term" value="C:cytoplasm"/>
    <property type="evidence" value="ECO:0007669"/>
    <property type="project" value="UniProtKB-SubCell"/>
</dbReference>
<dbReference type="GO" id="GO:0005524">
    <property type="term" value="F:ATP binding"/>
    <property type="evidence" value="ECO:0007669"/>
    <property type="project" value="UniProtKB-UniRule"/>
</dbReference>
<dbReference type="GO" id="GO:0140096">
    <property type="term" value="F:catalytic activity, acting on a protein"/>
    <property type="evidence" value="ECO:0007669"/>
    <property type="project" value="UniProtKB-ARBA"/>
</dbReference>
<dbReference type="GO" id="GO:0004820">
    <property type="term" value="F:glycine-tRNA ligase activity"/>
    <property type="evidence" value="ECO:0000250"/>
    <property type="project" value="UniProtKB"/>
</dbReference>
<dbReference type="GO" id="GO:0046983">
    <property type="term" value="F:protein dimerization activity"/>
    <property type="evidence" value="ECO:0000250"/>
    <property type="project" value="UniProtKB"/>
</dbReference>
<dbReference type="GO" id="GO:0016740">
    <property type="term" value="F:transferase activity"/>
    <property type="evidence" value="ECO:0007669"/>
    <property type="project" value="UniProtKB-ARBA"/>
</dbReference>
<dbReference type="GO" id="GO:0006426">
    <property type="term" value="P:glycyl-tRNA aminoacylation"/>
    <property type="evidence" value="ECO:0007669"/>
    <property type="project" value="UniProtKB-UniRule"/>
</dbReference>
<dbReference type="CDD" id="cd00774">
    <property type="entry name" value="GlyRS-like_core"/>
    <property type="match status" value="1"/>
</dbReference>
<dbReference type="CDD" id="cd00858">
    <property type="entry name" value="GlyRS_anticodon"/>
    <property type="match status" value="1"/>
</dbReference>
<dbReference type="FunFam" id="3.40.50.800:FF:000002">
    <property type="entry name" value="Glycine--tRNA ligase"/>
    <property type="match status" value="1"/>
</dbReference>
<dbReference type="Gene3D" id="3.30.40.230">
    <property type="match status" value="1"/>
</dbReference>
<dbReference type="Gene3D" id="3.40.50.800">
    <property type="entry name" value="Anticodon-binding domain"/>
    <property type="match status" value="1"/>
</dbReference>
<dbReference type="Gene3D" id="3.30.930.10">
    <property type="entry name" value="Bira Bifunctional Protein, Domain 2"/>
    <property type="match status" value="1"/>
</dbReference>
<dbReference type="HAMAP" id="MF_00253_B">
    <property type="entry name" value="Gly_tRNA_synth_B"/>
    <property type="match status" value="1"/>
</dbReference>
<dbReference type="InterPro" id="IPR002314">
    <property type="entry name" value="aa-tRNA-synt_IIb"/>
</dbReference>
<dbReference type="InterPro" id="IPR006195">
    <property type="entry name" value="aa-tRNA-synth_II"/>
</dbReference>
<dbReference type="InterPro" id="IPR045864">
    <property type="entry name" value="aa-tRNA-synth_II/BPL/LPL"/>
</dbReference>
<dbReference type="InterPro" id="IPR004154">
    <property type="entry name" value="Anticodon-bd"/>
</dbReference>
<dbReference type="InterPro" id="IPR036621">
    <property type="entry name" value="Anticodon-bd_dom_sf"/>
</dbReference>
<dbReference type="InterPro" id="IPR027031">
    <property type="entry name" value="Gly-tRNA_synthase/POLG2"/>
</dbReference>
<dbReference type="InterPro" id="IPR022961">
    <property type="entry name" value="Gly_tRNA_ligase_bac"/>
</dbReference>
<dbReference type="InterPro" id="IPR033731">
    <property type="entry name" value="GlyRS-like_core"/>
</dbReference>
<dbReference type="InterPro" id="IPR002315">
    <property type="entry name" value="tRNA-synt_gly"/>
</dbReference>
<dbReference type="NCBIfam" id="TIGR00389">
    <property type="entry name" value="glyS_dimeric"/>
    <property type="match status" value="1"/>
</dbReference>
<dbReference type="NCBIfam" id="NF003211">
    <property type="entry name" value="PRK04173.1"/>
    <property type="match status" value="1"/>
</dbReference>
<dbReference type="PANTHER" id="PTHR10745:SF8">
    <property type="entry name" value="DNA POLYMERASE SUBUNIT GAMMA-2, MITOCHONDRIAL"/>
    <property type="match status" value="1"/>
</dbReference>
<dbReference type="PANTHER" id="PTHR10745">
    <property type="entry name" value="GLYCYL-TRNA SYNTHETASE/DNA POLYMERASE SUBUNIT GAMMA-2"/>
    <property type="match status" value="1"/>
</dbReference>
<dbReference type="Pfam" id="PF03129">
    <property type="entry name" value="HGTP_anticodon"/>
    <property type="match status" value="1"/>
</dbReference>
<dbReference type="Pfam" id="PF00587">
    <property type="entry name" value="tRNA-synt_2b"/>
    <property type="match status" value="1"/>
</dbReference>
<dbReference type="PRINTS" id="PR01043">
    <property type="entry name" value="TRNASYNTHGLY"/>
</dbReference>
<dbReference type="SUPFAM" id="SSF52954">
    <property type="entry name" value="Class II aaRS ABD-related"/>
    <property type="match status" value="1"/>
</dbReference>
<dbReference type="SUPFAM" id="SSF55681">
    <property type="entry name" value="Class II aaRS and biotin synthetases"/>
    <property type="match status" value="1"/>
</dbReference>
<dbReference type="PROSITE" id="PS50862">
    <property type="entry name" value="AA_TRNA_LIGASE_II"/>
    <property type="match status" value="1"/>
</dbReference>
<comment type="function">
    <text evidence="1">Catalyzes the attachment of glycine to tRNA(Gly).</text>
</comment>
<comment type="catalytic activity">
    <reaction evidence="1">
        <text>tRNA(Gly) + glycine + ATP = glycyl-tRNA(Gly) + AMP + diphosphate</text>
        <dbReference type="Rhea" id="RHEA:16013"/>
        <dbReference type="Rhea" id="RHEA-COMP:9664"/>
        <dbReference type="Rhea" id="RHEA-COMP:9683"/>
        <dbReference type="ChEBI" id="CHEBI:30616"/>
        <dbReference type="ChEBI" id="CHEBI:33019"/>
        <dbReference type="ChEBI" id="CHEBI:57305"/>
        <dbReference type="ChEBI" id="CHEBI:78442"/>
        <dbReference type="ChEBI" id="CHEBI:78522"/>
        <dbReference type="ChEBI" id="CHEBI:456215"/>
        <dbReference type="EC" id="6.1.1.14"/>
    </reaction>
</comment>
<comment type="subunit">
    <text evidence="1">Homodimer.</text>
</comment>
<comment type="subcellular location">
    <subcellularLocation>
        <location evidence="1">Cytoplasm</location>
    </subcellularLocation>
</comment>
<comment type="similarity">
    <text evidence="1">Belongs to the class-II aminoacyl-tRNA synthetase family.</text>
</comment>
<accession>Q5HNY2</accession>
<keyword id="KW-0030">Aminoacyl-tRNA synthetase</keyword>
<keyword id="KW-0067">ATP-binding</keyword>
<keyword id="KW-0963">Cytoplasm</keyword>
<keyword id="KW-0436">Ligase</keyword>
<keyword id="KW-0547">Nucleotide-binding</keyword>
<keyword id="KW-0648">Protein biosynthesis</keyword>
<keyword id="KW-1185">Reference proteome</keyword>
<evidence type="ECO:0000255" key="1">
    <source>
        <dbReference type="HAMAP-Rule" id="MF_00253"/>
    </source>
</evidence>
<sequence>MVKNMDTIVQLAKHRGFVFPGSDIYGGLSNTWDYGPLGVELKNNIKKAWWQKFITQSPYNVGIDAAILMNPKTWEASGHLGNFNDPMIDNKDSKIRYRADKLIEDYMQNEKGDENFIADGLSFDEMKKIIDDEGIVCPVSKTANWTDIRQFNLMFKTFQGVTEDSTNELFLRPETAQGIFVNYKNVQRSMRKKLPFGIGQIGKSFRNEITPGNFIFRTREFEQMELEFFCKPGEEIEWQNYWKTFASEWLTDLNISEDNMRLRDHDEDELSHYSNATTDIEYKFPFGWGELWGIASRTDYDLRQHSEHSGEDFKYHDPETNEKYIPYCIEPSLGADRVTLAFLCDAYAEEGVEGSKDARTVMHFHPALAPYKAAVLPLSKKLSSEAIKIFEQLSSSFAIDFDESQSIGKRYRRQDEIGTPYCITFDFDSLEDNQVTVRDRDSMEQVRMPISELETFLAEKVKF</sequence>